<name>FBRL_LEIMA</name>
<accession>P35549</accession>
<sequence>MRGGFGRGGGGRGGSRGGRGGFGRGGGRGGGRGGGRGGGRGGGRGGGRGGGRGGAGAKVIVEPHMLHPGVFISKAKTDSLCTLNMVPGISVYGEKRIELGATQGGDDKKEYRLWNPYRSKLASAIYAGVSSIHMGPGSKVLYLGGATGTTVSHVSDLVGPEGMVYAVEFSHRVGRDLVEMSKRRPIVPIVEDARYPMKYRMLVPMVDCIFMDVAQPDQARILALNAQAFLQNGGHYVISIKANCIDSTLEAPVVIASELNKLKKDKLKPLEQVSLEPFERDHAVVVGVYRPVKKSKQ</sequence>
<evidence type="ECO:0000250" key="1"/>
<evidence type="ECO:0000256" key="2">
    <source>
        <dbReference type="SAM" id="MobiDB-lite"/>
    </source>
</evidence>
<evidence type="ECO:0000305" key="3"/>
<proteinExistence type="inferred from homology"/>
<feature type="chain" id="PRO_0000148515" description="rRNA 2'-O-methyltransferase fibrillarin">
    <location>
        <begin position="1"/>
        <end position="297"/>
    </location>
</feature>
<feature type="region of interest" description="Disordered" evidence="2">
    <location>
        <begin position="1"/>
        <end position="56"/>
    </location>
</feature>
<feature type="binding site" evidence="1">
    <location>
        <begin position="149"/>
        <end position="150"/>
    </location>
    <ligand>
        <name>S-adenosyl-L-methionine</name>
        <dbReference type="ChEBI" id="CHEBI:59789"/>
    </ligand>
</feature>
<feature type="binding site" evidence="1">
    <location>
        <begin position="168"/>
        <end position="169"/>
    </location>
    <ligand>
        <name>S-adenosyl-L-methionine</name>
        <dbReference type="ChEBI" id="CHEBI:59789"/>
    </ligand>
</feature>
<feature type="binding site" evidence="1">
    <location>
        <begin position="192"/>
        <end position="193"/>
    </location>
    <ligand>
        <name>S-adenosyl-L-methionine</name>
        <dbReference type="ChEBI" id="CHEBI:59789"/>
    </ligand>
</feature>
<feature type="binding site" evidence="1">
    <location>
        <begin position="212"/>
        <end position="215"/>
    </location>
    <ligand>
        <name>S-adenosyl-L-methionine</name>
        <dbReference type="ChEBI" id="CHEBI:59789"/>
    </ligand>
</feature>
<feature type="modified residue" description="Asymmetric dimethylarginine" evidence="1">
    <location>
        <position position="2"/>
    </location>
</feature>
<feature type="modified residue" description="Asymmetric dimethylarginine" evidence="1">
    <location>
        <position position="7"/>
    </location>
</feature>
<feature type="modified residue" description="Asymmetric dimethylarginine" evidence="1">
    <location>
        <position position="12"/>
    </location>
</feature>
<feature type="modified residue" description="Asymmetric dimethylarginine" evidence="1">
    <location>
        <position position="16"/>
    </location>
</feature>
<feature type="modified residue" description="Asymmetric dimethylarginine" evidence="1">
    <location>
        <position position="19"/>
    </location>
</feature>
<feature type="modified residue" description="Asymmetric dimethylarginine" evidence="1">
    <location>
        <position position="24"/>
    </location>
</feature>
<feature type="modified residue" description="Asymmetric dimethylarginine" evidence="1">
    <location>
        <position position="28"/>
    </location>
</feature>
<feature type="modified residue" description="Asymmetric dimethylarginine" evidence="1">
    <location>
        <position position="32"/>
    </location>
</feature>
<feature type="modified residue" description="Asymmetric dimethylarginine" evidence="1">
    <location>
        <position position="36"/>
    </location>
</feature>
<feature type="modified residue" description="Asymmetric dimethylarginine" evidence="1">
    <location>
        <position position="40"/>
    </location>
</feature>
<feature type="modified residue" description="Asymmetric dimethylarginine" evidence="1">
    <location>
        <position position="44"/>
    </location>
</feature>
<feature type="modified residue" description="Asymmetric dimethylarginine" evidence="1">
    <location>
        <position position="48"/>
    </location>
</feature>
<feature type="modified residue" description="Asymmetric dimethylarginine" evidence="1">
    <location>
        <position position="52"/>
    </location>
</feature>
<organism>
    <name type="scientific">Leishmania major</name>
    <dbReference type="NCBI Taxonomy" id="5664"/>
    <lineage>
        <taxon>Eukaryota</taxon>
        <taxon>Discoba</taxon>
        <taxon>Euglenozoa</taxon>
        <taxon>Kinetoplastea</taxon>
        <taxon>Metakinetoplastina</taxon>
        <taxon>Trypanosomatida</taxon>
        <taxon>Trypanosomatidae</taxon>
        <taxon>Leishmaniinae</taxon>
        <taxon>Leishmania</taxon>
    </lineage>
</organism>
<dbReference type="EC" id="2.1.1.-"/>
<dbReference type="EMBL" id="L26252">
    <property type="protein sequence ID" value="AAA67420.1"/>
    <property type="molecule type" value="Genomic_DNA"/>
</dbReference>
<dbReference type="SMR" id="P35549"/>
<dbReference type="VEuPathDB" id="TriTrypDB:LmjF.36.3070"/>
<dbReference type="VEuPathDB" id="TriTrypDB:LMJFC_360044100"/>
<dbReference type="VEuPathDB" id="TriTrypDB:LMJLV39_360040100"/>
<dbReference type="VEuPathDB" id="TriTrypDB:LMJSD75_360040000"/>
<dbReference type="eggNOG" id="KOG1596">
    <property type="taxonomic scope" value="Eukaryota"/>
</dbReference>
<dbReference type="GO" id="GO:0005730">
    <property type="term" value="C:nucleolus"/>
    <property type="evidence" value="ECO:0007669"/>
    <property type="project" value="UniProtKB-SubCell"/>
</dbReference>
<dbReference type="GO" id="GO:1990904">
    <property type="term" value="C:ribonucleoprotein complex"/>
    <property type="evidence" value="ECO:0007669"/>
    <property type="project" value="UniProtKB-KW"/>
</dbReference>
<dbReference type="GO" id="GO:0008168">
    <property type="term" value="F:methyltransferase activity"/>
    <property type="evidence" value="ECO:0007669"/>
    <property type="project" value="UniProtKB-KW"/>
</dbReference>
<dbReference type="GO" id="GO:0003723">
    <property type="term" value="F:RNA binding"/>
    <property type="evidence" value="ECO:0007669"/>
    <property type="project" value="UniProtKB-KW"/>
</dbReference>
<dbReference type="GO" id="GO:0032259">
    <property type="term" value="P:methylation"/>
    <property type="evidence" value="ECO:0007669"/>
    <property type="project" value="UniProtKB-KW"/>
</dbReference>
<dbReference type="GO" id="GO:0006364">
    <property type="term" value="P:rRNA processing"/>
    <property type="evidence" value="ECO:0007669"/>
    <property type="project" value="UniProtKB-KW"/>
</dbReference>
<dbReference type="FunFam" id="3.30.200.20:FF:000056">
    <property type="entry name" value="Fibrillarin like 1"/>
    <property type="match status" value="1"/>
</dbReference>
<dbReference type="FunFam" id="3.40.50.150:FF:000001">
    <property type="entry name" value="Fibrillarin like 1"/>
    <property type="match status" value="1"/>
</dbReference>
<dbReference type="Gene3D" id="3.30.200.20">
    <property type="entry name" value="Phosphorylase Kinase, domain 1"/>
    <property type="match status" value="1"/>
</dbReference>
<dbReference type="Gene3D" id="3.40.50.150">
    <property type="entry name" value="Vaccinia Virus protein VP39"/>
    <property type="match status" value="1"/>
</dbReference>
<dbReference type="HAMAP" id="MF_00351">
    <property type="entry name" value="RNA_methyltransf_FlpA"/>
    <property type="match status" value="1"/>
</dbReference>
<dbReference type="InterPro" id="IPR000692">
    <property type="entry name" value="Fibrillarin"/>
</dbReference>
<dbReference type="InterPro" id="IPR020813">
    <property type="entry name" value="Fibrillarin_CS"/>
</dbReference>
<dbReference type="InterPro" id="IPR029063">
    <property type="entry name" value="SAM-dependent_MTases_sf"/>
</dbReference>
<dbReference type="NCBIfam" id="NF003276">
    <property type="entry name" value="PRK04266.1-2"/>
    <property type="match status" value="1"/>
</dbReference>
<dbReference type="PANTHER" id="PTHR10335:SF17">
    <property type="entry name" value="FIBRILLARIN"/>
    <property type="match status" value="1"/>
</dbReference>
<dbReference type="PANTHER" id="PTHR10335">
    <property type="entry name" value="RRNA 2-O-METHYLTRANSFERASE FIBRILLARIN"/>
    <property type="match status" value="1"/>
</dbReference>
<dbReference type="Pfam" id="PF01269">
    <property type="entry name" value="Fibrillarin"/>
    <property type="match status" value="1"/>
</dbReference>
<dbReference type="PIRSF" id="PIRSF006540">
    <property type="entry name" value="Nop17p"/>
    <property type="match status" value="1"/>
</dbReference>
<dbReference type="PRINTS" id="PR00052">
    <property type="entry name" value="FIBRILLARIN"/>
</dbReference>
<dbReference type="SMART" id="SM01206">
    <property type="entry name" value="Fibrillarin"/>
    <property type="match status" value="1"/>
</dbReference>
<dbReference type="SUPFAM" id="SSF53335">
    <property type="entry name" value="S-adenosyl-L-methionine-dependent methyltransferases"/>
    <property type="match status" value="1"/>
</dbReference>
<dbReference type="PROSITE" id="PS00566">
    <property type="entry name" value="FIBRILLARIN"/>
    <property type="match status" value="1"/>
</dbReference>
<reference key="1">
    <citation type="journal article" date="1994" name="Mol. Biochem. Parasitol.">
        <title>Cloning and sequence of a Leishmania major homologue to the fibrillarin gene.</title>
        <authorList>
            <person name="Cappai R."/>
            <person name="Osborn A.H."/>
            <person name="Handman E."/>
        </authorList>
    </citation>
    <scope>NUCLEOTIDE SEQUENCE [GENOMIC DNA]</scope>
    <source>
        <strain>V121</strain>
    </source>
</reference>
<keyword id="KW-0488">Methylation</keyword>
<keyword id="KW-0489">Methyltransferase</keyword>
<keyword id="KW-0539">Nucleus</keyword>
<keyword id="KW-0687">Ribonucleoprotein</keyword>
<keyword id="KW-0694">RNA-binding</keyword>
<keyword id="KW-0698">rRNA processing</keyword>
<keyword id="KW-0949">S-adenosyl-L-methionine</keyword>
<keyword id="KW-0808">Transferase</keyword>
<protein>
    <recommendedName>
        <fullName>rRNA 2'-O-methyltransferase fibrillarin</fullName>
        <ecNumber>2.1.1.-</ecNumber>
    </recommendedName>
    <alternativeName>
        <fullName>Histone-glutamine methyltransferase</fullName>
    </alternativeName>
</protein>
<comment type="function">
    <text evidence="1">S-adenosyl-L-methionine-dependent methyltransferase that has the ability to methylate both RNAs and proteins. Involved in pre-rRNA processing. Utilizes the methyl donor S-adenosyl-L-methionine to catalyze the site-specific 2'-hydroxyl methylation of ribose moieties in pre-ribosomal RNA. Site specificity is provided by a guide RNA that base pairs with the substrate. Methylation occurs at a characteristic distance from the sequence involved in base pairing with the guide RNA. Also acts as a protein methyltransferase by mediating methylation of 'Gln-105' of histone H2A (H2AQ105me), a modification that impairs binding of the FACT complex and is specifically present at 35S ribosomal DNA locus (By similarity).</text>
</comment>
<comment type="catalytic activity">
    <reaction>
        <text>L-glutaminyl-[histone H2A] + S-adenosyl-L-methionine = N(5)-methyl-L-glutaminyl-[histone H2A] + S-adenosyl-L-homocysteine + H(+)</text>
        <dbReference type="Rhea" id="RHEA:50904"/>
        <dbReference type="Rhea" id="RHEA-COMP:12837"/>
        <dbReference type="Rhea" id="RHEA-COMP:12839"/>
        <dbReference type="ChEBI" id="CHEBI:15378"/>
        <dbReference type="ChEBI" id="CHEBI:30011"/>
        <dbReference type="ChEBI" id="CHEBI:57856"/>
        <dbReference type="ChEBI" id="CHEBI:59789"/>
        <dbReference type="ChEBI" id="CHEBI:61891"/>
    </reaction>
</comment>
<comment type="subunit">
    <text evidence="1">Component of box C/D small nucleolar ribonucleoprotein (snoRNP) particles. It is associated with the U3, U8 and U13 small nuclear RNAs.</text>
</comment>
<comment type="subcellular location">
    <subcellularLocation>
        <location>Nucleus</location>
        <location>Nucleolus</location>
    </subcellularLocation>
    <text>Fibrillar region of the nucleolus.</text>
</comment>
<comment type="PTM">
    <text>By homology to other fibrillarins, some or all of the N-terminal domain arginines are modified to asymmetric dimethylarginine (DMA).</text>
</comment>
<comment type="similarity">
    <text evidence="3">Belongs to the methyltransferase superfamily. Fibrillarin family.</text>
</comment>